<feature type="chain" id="PRO_1000121985" description="Chromosomal replication initiator protein DnaA">
    <location>
        <begin position="1"/>
        <end position="455"/>
    </location>
</feature>
<feature type="region of interest" description="Domain I, interacts with DnaA modulators" evidence="1">
    <location>
        <begin position="1"/>
        <end position="75"/>
    </location>
</feature>
<feature type="region of interest" description="Domain II" evidence="1">
    <location>
        <begin position="75"/>
        <end position="106"/>
    </location>
</feature>
<feature type="region of interest" description="Domain III, AAA+ region" evidence="1">
    <location>
        <begin position="107"/>
        <end position="321"/>
    </location>
</feature>
<feature type="region of interest" description="Domain IV, binds dsDNA" evidence="1">
    <location>
        <begin position="322"/>
        <end position="455"/>
    </location>
</feature>
<feature type="binding site" evidence="1">
    <location>
        <position position="151"/>
    </location>
    <ligand>
        <name>ATP</name>
        <dbReference type="ChEBI" id="CHEBI:30616"/>
    </ligand>
</feature>
<feature type="binding site" evidence="1">
    <location>
        <position position="153"/>
    </location>
    <ligand>
        <name>ATP</name>
        <dbReference type="ChEBI" id="CHEBI:30616"/>
    </ligand>
</feature>
<feature type="binding site" evidence="1">
    <location>
        <position position="154"/>
    </location>
    <ligand>
        <name>ATP</name>
        <dbReference type="ChEBI" id="CHEBI:30616"/>
    </ligand>
</feature>
<feature type="binding site" evidence="1">
    <location>
        <position position="155"/>
    </location>
    <ligand>
        <name>ATP</name>
        <dbReference type="ChEBI" id="CHEBI:30616"/>
    </ligand>
</feature>
<proteinExistence type="inferred from homology"/>
<gene>
    <name evidence="1" type="primary">dnaA</name>
    <name type="ordered locus">HPP12_1503</name>
</gene>
<dbReference type="EMBL" id="CP001217">
    <property type="protein sequence ID" value="ACJ08651.1"/>
    <property type="molecule type" value="Genomic_DNA"/>
</dbReference>
<dbReference type="SMR" id="B6JP23"/>
<dbReference type="KEGG" id="hpp:HPP12_1503"/>
<dbReference type="HOGENOM" id="CLU_026910_3_1_7"/>
<dbReference type="Proteomes" id="UP000008198">
    <property type="component" value="Chromosome"/>
</dbReference>
<dbReference type="GO" id="GO:0005737">
    <property type="term" value="C:cytoplasm"/>
    <property type="evidence" value="ECO:0007669"/>
    <property type="project" value="UniProtKB-SubCell"/>
</dbReference>
<dbReference type="GO" id="GO:0005886">
    <property type="term" value="C:plasma membrane"/>
    <property type="evidence" value="ECO:0007669"/>
    <property type="project" value="TreeGrafter"/>
</dbReference>
<dbReference type="GO" id="GO:0005524">
    <property type="term" value="F:ATP binding"/>
    <property type="evidence" value="ECO:0007669"/>
    <property type="project" value="UniProtKB-UniRule"/>
</dbReference>
<dbReference type="GO" id="GO:0016887">
    <property type="term" value="F:ATP hydrolysis activity"/>
    <property type="evidence" value="ECO:0007669"/>
    <property type="project" value="InterPro"/>
</dbReference>
<dbReference type="GO" id="GO:0003688">
    <property type="term" value="F:DNA replication origin binding"/>
    <property type="evidence" value="ECO:0007669"/>
    <property type="project" value="UniProtKB-UniRule"/>
</dbReference>
<dbReference type="GO" id="GO:0008289">
    <property type="term" value="F:lipid binding"/>
    <property type="evidence" value="ECO:0007669"/>
    <property type="project" value="UniProtKB-KW"/>
</dbReference>
<dbReference type="GO" id="GO:0006270">
    <property type="term" value="P:DNA replication initiation"/>
    <property type="evidence" value="ECO:0007669"/>
    <property type="project" value="UniProtKB-UniRule"/>
</dbReference>
<dbReference type="GO" id="GO:0006275">
    <property type="term" value="P:regulation of DNA replication"/>
    <property type="evidence" value="ECO:0007669"/>
    <property type="project" value="UniProtKB-UniRule"/>
</dbReference>
<dbReference type="CDD" id="cd00009">
    <property type="entry name" value="AAA"/>
    <property type="match status" value="1"/>
</dbReference>
<dbReference type="CDD" id="cd06571">
    <property type="entry name" value="Bac_DnaA_C"/>
    <property type="match status" value="1"/>
</dbReference>
<dbReference type="FunFam" id="1.10.1750.10:FF:000007">
    <property type="entry name" value="Chromosomal replication initiator protein DnaA"/>
    <property type="match status" value="1"/>
</dbReference>
<dbReference type="FunFam" id="3.40.50.300:FF:002820">
    <property type="entry name" value="Chromosomal replication initiator protein DnaA"/>
    <property type="match status" value="1"/>
</dbReference>
<dbReference type="Gene3D" id="1.10.1750.10">
    <property type="match status" value="1"/>
</dbReference>
<dbReference type="Gene3D" id="1.10.8.60">
    <property type="match status" value="1"/>
</dbReference>
<dbReference type="Gene3D" id="3.30.300.180">
    <property type="match status" value="1"/>
</dbReference>
<dbReference type="Gene3D" id="3.40.50.300">
    <property type="entry name" value="P-loop containing nucleotide triphosphate hydrolases"/>
    <property type="match status" value="1"/>
</dbReference>
<dbReference type="HAMAP" id="MF_00377">
    <property type="entry name" value="DnaA_bact"/>
    <property type="match status" value="1"/>
</dbReference>
<dbReference type="InterPro" id="IPR003593">
    <property type="entry name" value="AAA+_ATPase"/>
</dbReference>
<dbReference type="InterPro" id="IPR001957">
    <property type="entry name" value="Chromosome_initiator_DnaA"/>
</dbReference>
<dbReference type="InterPro" id="IPR020591">
    <property type="entry name" value="Chromosome_initiator_DnaA-like"/>
</dbReference>
<dbReference type="InterPro" id="IPR018312">
    <property type="entry name" value="Chromosome_initiator_DnaA_CS"/>
</dbReference>
<dbReference type="InterPro" id="IPR013159">
    <property type="entry name" value="DnaA_C"/>
</dbReference>
<dbReference type="InterPro" id="IPR013317">
    <property type="entry name" value="DnaA_dom"/>
</dbReference>
<dbReference type="InterPro" id="IPR038454">
    <property type="entry name" value="DnaA_N_sf"/>
</dbReference>
<dbReference type="InterPro" id="IPR027417">
    <property type="entry name" value="P-loop_NTPase"/>
</dbReference>
<dbReference type="InterPro" id="IPR010921">
    <property type="entry name" value="Trp_repressor/repl_initiator"/>
</dbReference>
<dbReference type="NCBIfam" id="TIGR00362">
    <property type="entry name" value="DnaA"/>
    <property type="match status" value="1"/>
</dbReference>
<dbReference type="PANTHER" id="PTHR30050">
    <property type="entry name" value="CHROMOSOMAL REPLICATION INITIATOR PROTEIN DNAA"/>
    <property type="match status" value="1"/>
</dbReference>
<dbReference type="PANTHER" id="PTHR30050:SF2">
    <property type="entry name" value="CHROMOSOMAL REPLICATION INITIATOR PROTEIN DNAA"/>
    <property type="match status" value="1"/>
</dbReference>
<dbReference type="Pfam" id="PF00308">
    <property type="entry name" value="Bac_DnaA"/>
    <property type="match status" value="1"/>
</dbReference>
<dbReference type="Pfam" id="PF08299">
    <property type="entry name" value="Bac_DnaA_C"/>
    <property type="match status" value="1"/>
</dbReference>
<dbReference type="PRINTS" id="PR00051">
    <property type="entry name" value="DNAA"/>
</dbReference>
<dbReference type="SMART" id="SM00382">
    <property type="entry name" value="AAA"/>
    <property type="match status" value="1"/>
</dbReference>
<dbReference type="SMART" id="SM00760">
    <property type="entry name" value="Bac_DnaA_C"/>
    <property type="match status" value="1"/>
</dbReference>
<dbReference type="SUPFAM" id="SSF52540">
    <property type="entry name" value="P-loop containing nucleoside triphosphate hydrolases"/>
    <property type="match status" value="1"/>
</dbReference>
<dbReference type="SUPFAM" id="SSF48295">
    <property type="entry name" value="TrpR-like"/>
    <property type="match status" value="1"/>
</dbReference>
<dbReference type="PROSITE" id="PS01008">
    <property type="entry name" value="DNAA"/>
    <property type="match status" value="1"/>
</dbReference>
<sequence length="455" mass="51474">MDTNNNIEKEILALAKQKVSLIEYENYLSQIKYNPNASKSDIAFFYAPNKVLCTTITAKYGALLKEILSQNKVGMHLAHSVDVRIEVAPKIQINAQANINYKAIKTSVKDSYTFENFVVGSCNNTVYEIAKKVAQSDTPPYNPVLFYGGTGLGKTHILNAIGNHALEKHKKVVLVTSEDFLTDFLKHLDNKTMDSFKAKYRHCDFFLLDDAQFLQGKPKLEEEFFHTFNELHANSKQIVLISDRSPKNIAGLEDRLKSRFEWGITAKVMPPNLETKLSIVKQKCQLNQITLPEEVMEYIAQHISDNIRQMEGAIIKISVNANLMNAPIDLNLAKTVLEDLQKDHAEGSSLENILLAVAQSLNLKSSEIKVSSRQKNVALARKLVVYFARLYTPNPTLSLAQFLDLKDHSSISKMYSSVKKMLEEEKNPFILSLREEIKNRLNELNDKKTAFNSSE</sequence>
<name>DNAA_HELP2</name>
<evidence type="ECO:0000255" key="1">
    <source>
        <dbReference type="HAMAP-Rule" id="MF_00377"/>
    </source>
</evidence>
<accession>B6JP23</accession>
<protein>
    <recommendedName>
        <fullName evidence="1">Chromosomal replication initiator protein DnaA</fullName>
    </recommendedName>
</protein>
<organism>
    <name type="scientific">Helicobacter pylori (strain P12)</name>
    <dbReference type="NCBI Taxonomy" id="570508"/>
    <lineage>
        <taxon>Bacteria</taxon>
        <taxon>Pseudomonadati</taxon>
        <taxon>Campylobacterota</taxon>
        <taxon>Epsilonproteobacteria</taxon>
        <taxon>Campylobacterales</taxon>
        <taxon>Helicobacteraceae</taxon>
        <taxon>Helicobacter</taxon>
    </lineage>
</organism>
<keyword id="KW-0067">ATP-binding</keyword>
<keyword id="KW-0963">Cytoplasm</keyword>
<keyword id="KW-0235">DNA replication</keyword>
<keyword id="KW-0238">DNA-binding</keyword>
<keyword id="KW-0446">Lipid-binding</keyword>
<keyword id="KW-0547">Nucleotide-binding</keyword>
<reference key="1">
    <citation type="submission" date="2008-10" db="EMBL/GenBank/DDBJ databases">
        <title>The complete genome sequence of Helicobacter pylori strain P12.</title>
        <authorList>
            <person name="Fischer W."/>
            <person name="Windhager L."/>
            <person name="Karnholz A."/>
            <person name="Zeiller M."/>
            <person name="Zimmer R."/>
            <person name="Haas R."/>
        </authorList>
    </citation>
    <scope>NUCLEOTIDE SEQUENCE [LARGE SCALE GENOMIC DNA]</scope>
    <source>
        <strain>P12</strain>
    </source>
</reference>
<comment type="function">
    <text evidence="1">Plays an essential role in the initiation and regulation of chromosomal replication. ATP-DnaA binds to the origin of replication (oriC) to initiate formation of the DNA replication initiation complex once per cell cycle. Binds the DnaA box (a 9 base pair repeat at the origin) and separates the double-stranded (ds)DNA. Forms a right-handed helical filament on oriC DNA; dsDNA binds to the exterior of the filament while single-stranded (ss)DNA is stabiized in the filament's interior. The ATP-DnaA-oriC complex binds and stabilizes one strand of the AT-rich DNA unwinding element (DUE), permitting loading of DNA polymerase. After initiation quickly degrades to an ADP-DnaA complex that is not apt for DNA replication. Binds acidic phospholipids.</text>
</comment>
<comment type="subunit">
    <text evidence="1">Oligomerizes as a right-handed, spiral filament on DNA at oriC.</text>
</comment>
<comment type="subcellular location">
    <subcellularLocation>
        <location evidence="1">Cytoplasm</location>
    </subcellularLocation>
</comment>
<comment type="domain">
    <text evidence="1">Domain I is involved in oligomerization and binding regulators, domain II is flexibile and of varying length in different bacteria, domain III forms the AAA+ region, while domain IV binds dsDNA.</text>
</comment>
<comment type="similarity">
    <text evidence="1">Belongs to the DnaA family.</text>
</comment>